<name>RUVB_STRMU</name>
<sequence>MLFCLLRFCYNSLMTRILDNELMGDEEFAERTLRPQYLQEYIGQDKVKDQLKIFIKAAKQRDEALDHVLLFGPPGLGKTTMAFVIANELGVNLKQTSGPAIEKAGDLVAVLNDLEPGDVLFIDEIHRLPMAVEEVLYSAMEDFYIDIMIGAGETSRSVHLDLPPFTLIGATTRAGMLSNPLRARFGITGHMEYYTDIDLTEIVERTADIFEMTITHQAALELARRSRGTPRIANRLLKRVRDYAQIMGDGLIDDKITDKALTMLDVDHEGLDYVDQKILKTMIEMYHGGPVGLGTLSVNIAEERETVEDMYEPYLIQKGFIIRTRSGRVATAKAYEHLGYRYTE</sequence>
<protein>
    <recommendedName>
        <fullName evidence="1">Holliday junction branch migration complex subunit RuvB</fullName>
        <ecNumber evidence="1">3.6.4.-</ecNumber>
    </recommendedName>
</protein>
<keyword id="KW-0067">ATP-binding</keyword>
<keyword id="KW-0963">Cytoplasm</keyword>
<keyword id="KW-0227">DNA damage</keyword>
<keyword id="KW-0233">DNA recombination</keyword>
<keyword id="KW-0234">DNA repair</keyword>
<keyword id="KW-0238">DNA-binding</keyword>
<keyword id="KW-0378">Hydrolase</keyword>
<keyword id="KW-0547">Nucleotide-binding</keyword>
<keyword id="KW-1185">Reference proteome</keyword>
<reference key="1">
    <citation type="journal article" date="2002" name="Proc. Natl. Acad. Sci. U.S.A.">
        <title>Genome sequence of Streptococcus mutans UA159, a cariogenic dental pathogen.</title>
        <authorList>
            <person name="Ajdic D.J."/>
            <person name="McShan W.M."/>
            <person name="McLaughlin R.E."/>
            <person name="Savic G."/>
            <person name="Chang J."/>
            <person name="Carson M.B."/>
            <person name="Primeaux C."/>
            <person name="Tian R."/>
            <person name="Kenton S."/>
            <person name="Jia H.G."/>
            <person name="Lin S.P."/>
            <person name="Qian Y."/>
            <person name="Li S."/>
            <person name="Zhu H."/>
            <person name="Najar F.Z."/>
            <person name="Lai H."/>
            <person name="White J."/>
            <person name="Roe B.A."/>
            <person name="Ferretti J.J."/>
        </authorList>
    </citation>
    <scope>NUCLEOTIDE SEQUENCE [LARGE SCALE GENOMIC DNA]</scope>
    <source>
        <strain>ATCC 700610 / UA159</strain>
    </source>
</reference>
<accession>Q8DWI4</accession>
<dbReference type="EC" id="3.6.4.-" evidence="1"/>
<dbReference type="EMBL" id="AE014133">
    <property type="protein sequence ID" value="AAN57851.1"/>
    <property type="molecule type" value="Genomic_DNA"/>
</dbReference>
<dbReference type="RefSeq" id="NP_720545.1">
    <property type="nucleotide sequence ID" value="NC_004350.2"/>
</dbReference>
<dbReference type="SMR" id="Q8DWI4"/>
<dbReference type="STRING" id="210007.SMU_64"/>
<dbReference type="KEGG" id="smu:SMU_64"/>
<dbReference type="PATRIC" id="fig|210007.7.peg.56"/>
<dbReference type="eggNOG" id="COG2255">
    <property type="taxonomic scope" value="Bacteria"/>
</dbReference>
<dbReference type="HOGENOM" id="CLU_055599_1_0_9"/>
<dbReference type="OrthoDB" id="9804478at2"/>
<dbReference type="PhylomeDB" id="Q8DWI4"/>
<dbReference type="Proteomes" id="UP000002512">
    <property type="component" value="Chromosome"/>
</dbReference>
<dbReference type="GO" id="GO:0005737">
    <property type="term" value="C:cytoplasm"/>
    <property type="evidence" value="ECO:0007669"/>
    <property type="project" value="UniProtKB-SubCell"/>
</dbReference>
<dbReference type="GO" id="GO:0048476">
    <property type="term" value="C:Holliday junction resolvase complex"/>
    <property type="evidence" value="ECO:0007669"/>
    <property type="project" value="UniProtKB-UniRule"/>
</dbReference>
<dbReference type="GO" id="GO:0005524">
    <property type="term" value="F:ATP binding"/>
    <property type="evidence" value="ECO:0007669"/>
    <property type="project" value="UniProtKB-UniRule"/>
</dbReference>
<dbReference type="GO" id="GO:0016887">
    <property type="term" value="F:ATP hydrolysis activity"/>
    <property type="evidence" value="ECO:0007669"/>
    <property type="project" value="InterPro"/>
</dbReference>
<dbReference type="GO" id="GO:0000400">
    <property type="term" value="F:four-way junction DNA binding"/>
    <property type="evidence" value="ECO:0007669"/>
    <property type="project" value="UniProtKB-UniRule"/>
</dbReference>
<dbReference type="GO" id="GO:0009378">
    <property type="term" value="F:four-way junction helicase activity"/>
    <property type="evidence" value="ECO:0007669"/>
    <property type="project" value="InterPro"/>
</dbReference>
<dbReference type="GO" id="GO:0006310">
    <property type="term" value="P:DNA recombination"/>
    <property type="evidence" value="ECO:0007669"/>
    <property type="project" value="UniProtKB-UniRule"/>
</dbReference>
<dbReference type="GO" id="GO:0006281">
    <property type="term" value="P:DNA repair"/>
    <property type="evidence" value="ECO:0007669"/>
    <property type="project" value="UniProtKB-UniRule"/>
</dbReference>
<dbReference type="CDD" id="cd00009">
    <property type="entry name" value="AAA"/>
    <property type="match status" value="1"/>
</dbReference>
<dbReference type="Gene3D" id="1.10.8.60">
    <property type="match status" value="1"/>
</dbReference>
<dbReference type="Gene3D" id="3.40.50.300">
    <property type="entry name" value="P-loop containing nucleotide triphosphate hydrolases"/>
    <property type="match status" value="1"/>
</dbReference>
<dbReference type="Gene3D" id="1.10.10.10">
    <property type="entry name" value="Winged helix-like DNA-binding domain superfamily/Winged helix DNA-binding domain"/>
    <property type="match status" value="1"/>
</dbReference>
<dbReference type="HAMAP" id="MF_00016">
    <property type="entry name" value="DNA_HJ_migration_RuvB"/>
    <property type="match status" value="1"/>
</dbReference>
<dbReference type="InterPro" id="IPR003593">
    <property type="entry name" value="AAA+_ATPase"/>
</dbReference>
<dbReference type="InterPro" id="IPR041445">
    <property type="entry name" value="AAA_lid_4"/>
</dbReference>
<dbReference type="InterPro" id="IPR004605">
    <property type="entry name" value="DNA_helicase_Holl-junc_RuvB"/>
</dbReference>
<dbReference type="InterPro" id="IPR027417">
    <property type="entry name" value="P-loop_NTPase"/>
</dbReference>
<dbReference type="InterPro" id="IPR008824">
    <property type="entry name" value="RuvB-like_N"/>
</dbReference>
<dbReference type="InterPro" id="IPR008823">
    <property type="entry name" value="RuvB_C"/>
</dbReference>
<dbReference type="InterPro" id="IPR036388">
    <property type="entry name" value="WH-like_DNA-bd_sf"/>
</dbReference>
<dbReference type="InterPro" id="IPR036390">
    <property type="entry name" value="WH_DNA-bd_sf"/>
</dbReference>
<dbReference type="NCBIfam" id="NF000868">
    <property type="entry name" value="PRK00080.1"/>
    <property type="match status" value="1"/>
</dbReference>
<dbReference type="NCBIfam" id="TIGR00635">
    <property type="entry name" value="ruvB"/>
    <property type="match status" value="1"/>
</dbReference>
<dbReference type="PANTHER" id="PTHR42848">
    <property type="match status" value="1"/>
</dbReference>
<dbReference type="PANTHER" id="PTHR42848:SF1">
    <property type="entry name" value="HOLLIDAY JUNCTION BRANCH MIGRATION COMPLEX SUBUNIT RUVB"/>
    <property type="match status" value="1"/>
</dbReference>
<dbReference type="Pfam" id="PF17864">
    <property type="entry name" value="AAA_lid_4"/>
    <property type="match status" value="1"/>
</dbReference>
<dbReference type="Pfam" id="PF05491">
    <property type="entry name" value="RuvB_C"/>
    <property type="match status" value="1"/>
</dbReference>
<dbReference type="Pfam" id="PF05496">
    <property type="entry name" value="RuvB_N"/>
    <property type="match status" value="1"/>
</dbReference>
<dbReference type="SMART" id="SM00382">
    <property type="entry name" value="AAA"/>
    <property type="match status" value="1"/>
</dbReference>
<dbReference type="SUPFAM" id="SSF52540">
    <property type="entry name" value="P-loop containing nucleoside triphosphate hydrolases"/>
    <property type="match status" value="1"/>
</dbReference>
<dbReference type="SUPFAM" id="SSF46785">
    <property type="entry name" value="Winged helix' DNA-binding domain"/>
    <property type="match status" value="1"/>
</dbReference>
<organism>
    <name type="scientific">Streptococcus mutans serotype c (strain ATCC 700610 / UA159)</name>
    <dbReference type="NCBI Taxonomy" id="210007"/>
    <lineage>
        <taxon>Bacteria</taxon>
        <taxon>Bacillati</taxon>
        <taxon>Bacillota</taxon>
        <taxon>Bacilli</taxon>
        <taxon>Lactobacillales</taxon>
        <taxon>Streptococcaceae</taxon>
        <taxon>Streptococcus</taxon>
    </lineage>
</organism>
<evidence type="ECO:0000255" key="1">
    <source>
        <dbReference type="HAMAP-Rule" id="MF_00016"/>
    </source>
</evidence>
<gene>
    <name evidence="1" type="primary">ruvB</name>
    <name type="ordered locus">SMU_64</name>
</gene>
<feature type="chain" id="PRO_0000165606" description="Holliday junction branch migration complex subunit RuvB">
    <location>
        <begin position="1"/>
        <end position="344"/>
    </location>
</feature>
<feature type="region of interest" description="Large ATPase domain (RuvB-L)" evidence="1">
    <location>
        <begin position="4"/>
        <end position="194"/>
    </location>
</feature>
<feature type="region of interest" description="Small ATPAse domain (RuvB-S)" evidence="1">
    <location>
        <begin position="195"/>
        <end position="265"/>
    </location>
</feature>
<feature type="region of interest" description="Head domain (RuvB-H)" evidence="1">
    <location>
        <begin position="268"/>
        <end position="344"/>
    </location>
</feature>
<feature type="binding site" evidence="1">
    <location>
        <position position="33"/>
    </location>
    <ligand>
        <name>ATP</name>
        <dbReference type="ChEBI" id="CHEBI:30616"/>
    </ligand>
</feature>
<feature type="binding site" evidence="1">
    <location>
        <position position="34"/>
    </location>
    <ligand>
        <name>ATP</name>
        <dbReference type="ChEBI" id="CHEBI:30616"/>
    </ligand>
</feature>
<feature type="binding site" evidence="1">
    <location>
        <position position="75"/>
    </location>
    <ligand>
        <name>ATP</name>
        <dbReference type="ChEBI" id="CHEBI:30616"/>
    </ligand>
</feature>
<feature type="binding site" evidence="1">
    <location>
        <position position="78"/>
    </location>
    <ligand>
        <name>ATP</name>
        <dbReference type="ChEBI" id="CHEBI:30616"/>
    </ligand>
</feature>
<feature type="binding site" evidence="1">
    <location>
        <position position="79"/>
    </location>
    <ligand>
        <name>ATP</name>
        <dbReference type="ChEBI" id="CHEBI:30616"/>
    </ligand>
</feature>
<feature type="binding site" evidence="1">
    <location>
        <position position="79"/>
    </location>
    <ligand>
        <name>Mg(2+)</name>
        <dbReference type="ChEBI" id="CHEBI:18420"/>
    </ligand>
</feature>
<feature type="binding site" evidence="1">
    <location>
        <position position="80"/>
    </location>
    <ligand>
        <name>ATP</name>
        <dbReference type="ChEBI" id="CHEBI:30616"/>
    </ligand>
</feature>
<feature type="binding site" evidence="1">
    <location>
        <begin position="141"/>
        <end position="143"/>
    </location>
    <ligand>
        <name>ATP</name>
        <dbReference type="ChEBI" id="CHEBI:30616"/>
    </ligand>
</feature>
<feature type="binding site" evidence="1">
    <location>
        <position position="184"/>
    </location>
    <ligand>
        <name>ATP</name>
        <dbReference type="ChEBI" id="CHEBI:30616"/>
    </ligand>
</feature>
<feature type="binding site" evidence="1">
    <location>
        <position position="194"/>
    </location>
    <ligand>
        <name>ATP</name>
        <dbReference type="ChEBI" id="CHEBI:30616"/>
    </ligand>
</feature>
<feature type="binding site" evidence="1">
    <location>
        <position position="231"/>
    </location>
    <ligand>
        <name>ATP</name>
        <dbReference type="ChEBI" id="CHEBI:30616"/>
    </ligand>
</feature>
<feature type="binding site" evidence="1">
    <location>
        <position position="304"/>
    </location>
    <ligand>
        <name>DNA</name>
        <dbReference type="ChEBI" id="CHEBI:16991"/>
    </ligand>
</feature>
<feature type="binding site" evidence="1">
    <location>
        <position position="323"/>
    </location>
    <ligand>
        <name>DNA</name>
        <dbReference type="ChEBI" id="CHEBI:16991"/>
    </ligand>
</feature>
<feature type="binding site" evidence="1">
    <location>
        <position position="325"/>
    </location>
    <ligand>
        <name>DNA</name>
        <dbReference type="ChEBI" id="CHEBI:16991"/>
    </ligand>
</feature>
<feature type="binding site" evidence="1">
    <location>
        <position position="328"/>
    </location>
    <ligand>
        <name>DNA</name>
        <dbReference type="ChEBI" id="CHEBI:16991"/>
    </ligand>
</feature>
<comment type="function">
    <text evidence="1">The RuvA-RuvB-RuvC complex processes Holliday junction (HJ) DNA during genetic recombination and DNA repair, while the RuvA-RuvB complex plays an important role in the rescue of blocked DNA replication forks via replication fork reversal (RFR). RuvA specifically binds to HJ cruciform DNA, conferring on it an open structure. The RuvB hexamer acts as an ATP-dependent pump, pulling dsDNA into and through the RuvAB complex. RuvB forms 2 homohexamers on either side of HJ DNA bound by 1 or 2 RuvA tetramers; 4 subunits per hexamer contact DNA at a time. Coordinated motions by a converter formed by DNA-disengaged RuvB subunits stimulates ATP hydrolysis and nucleotide exchange. Immobilization of the converter enables RuvB to convert the ATP-contained energy into a lever motion, pulling 2 nucleotides of DNA out of the RuvA tetramer per ATP hydrolyzed, thus driving DNA branch migration. The RuvB motors rotate together with the DNA substrate, which together with the progressing nucleotide cycle form the mechanistic basis for DNA recombination by continuous HJ branch migration. Branch migration allows RuvC to scan DNA until it finds its consensus sequence, where it cleaves and resolves cruciform DNA.</text>
</comment>
<comment type="catalytic activity">
    <reaction evidence="1">
        <text>ATP + H2O = ADP + phosphate + H(+)</text>
        <dbReference type="Rhea" id="RHEA:13065"/>
        <dbReference type="ChEBI" id="CHEBI:15377"/>
        <dbReference type="ChEBI" id="CHEBI:15378"/>
        <dbReference type="ChEBI" id="CHEBI:30616"/>
        <dbReference type="ChEBI" id="CHEBI:43474"/>
        <dbReference type="ChEBI" id="CHEBI:456216"/>
    </reaction>
</comment>
<comment type="subunit">
    <text evidence="1">Homohexamer. Forms an RuvA(8)-RuvB(12)-Holliday junction (HJ) complex. HJ DNA is sandwiched between 2 RuvA tetramers; dsDNA enters through RuvA and exits via RuvB. An RuvB hexamer assembles on each DNA strand where it exits the tetramer. Each RuvB hexamer is contacted by two RuvA subunits (via domain III) on 2 adjacent RuvB subunits; this complex drives branch migration. In the full resolvosome a probable DNA-RuvA(4)-RuvB(12)-RuvC(2) complex forms which resolves the HJ.</text>
</comment>
<comment type="subcellular location">
    <subcellularLocation>
        <location evidence="1">Cytoplasm</location>
    </subcellularLocation>
</comment>
<comment type="domain">
    <text evidence="1">Has 3 domains, the large (RuvB-L) and small ATPase (RuvB-S) domains and the C-terminal head (RuvB-H) domain. The head domain binds DNA, while the ATPase domains jointly bind ATP, ADP or are empty depending on the state of the subunit in the translocation cycle. During a single DNA translocation step the structure of each domain remains the same, but their relative positions change.</text>
</comment>
<comment type="similarity">
    <text evidence="1">Belongs to the RuvB family.</text>
</comment>
<proteinExistence type="inferred from homology"/>